<name>RNH_MYCS2</name>
<evidence type="ECO:0000255" key="1">
    <source>
        <dbReference type="HAMAP-Rule" id="MF_00042"/>
    </source>
</evidence>
<evidence type="ECO:0000255" key="2">
    <source>
        <dbReference type="PROSITE-ProRule" id="PRU00408"/>
    </source>
</evidence>
<sequence>MSQDPVIIHTDGGCRPNPGPGGWGAVLRHREHVREMFGGEAAVTSNNRMELTAPIMALEALTRPVTVHLYTDSTYVRNGITKWVLGWERNGWMTAAKQPVKNVDLWQRLQAACARHQVEWFWVKGHSGIGDNELADELATRGLQEAVGLTTSSAGTSLR</sequence>
<reference key="1">
    <citation type="submission" date="2006-10" db="EMBL/GenBank/DDBJ databases">
        <authorList>
            <person name="Fleischmann R.D."/>
            <person name="Dodson R.J."/>
            <person name="Haft D.H."/>
            <person name="Merkel J.S."/>
            <person name="Nelson W.C."/>
            <person name="Fraser C.M."/>
        </authorList>
    </citation>
    <scope>NUCLEOTIDE SEQUENCE [LARGE SCALE GENOMIC DNA]</scope>
    <source>
        <strain>ATCC 700084 / mc(2)155</strain>
    </source>
</reference>
<reference key="2">
    <citation type="journal article" date="2007" name="Genome Biol.">
        <title>Interrupted coding sequences in Mycobacterium smegmatis: authentic mutations or sequencing errors?</title>
        <authorList>
            <person name="Deshayes C."/>
            <person name="Perrodou E."/>
            <person name="Gallien S."/>
            <person name="Euphrasie D."/>
            <person name="Schaeffer C."/>
            <person name="Van-Dorsselaer A."/>
            <person name="Poch O."/>
            <person name="Lecompte O."/>
            <person name="Reyrat J.-M."/>
        </authorList>
    </citation>
    <scope>NUCLEOTIDE SEQUENCE [LARGE SCALE GENOMIC DNA]</scope>
    <source>
        <strain>ATCC 700084 / mc(2)155</strain>
    </source>
</reference>
<reference key="3">
    <citation type="journal article" date="2009" name="Genome Res.">
        <title>Ortho-proteogenomics: multiple proteomes investigation through orthology and a new MS-based protocol.</title>
        <authorList>
            <person name="Gallien S."/>
            <person name="Perrodou E."/>
            <person name="Carapito C."/>
            <person name="Deshayes C."/>
            <person name="Reyrat J.-M."/>
            <person name="Van Dorsselaer A."/>
            <person name="Poch O."/>
            <person name="Schaeffer C."/>
            <person name="Lecompte O."/>
        </authorList>
    </citation>
    <scope>NUCLEOTIDE SEQUENCE [LARGE SCALE GENOMIC DNA]</scope>
    <source>
        <strain>ATCC 700084 / mc(2)155</strain>
    </source>
</reference>
<feature type="chain" id="PRO_1000074649" description="Ribonuclease H">
    <location>
        <begin position="1"/>
        <end position="159"/>
    </location>
</feature>
<feature type="domain" description="RNase H type-1" evidence="2">
    <location>
        <begin position="2"/>
        <end position="144"/>
    </location>
</feature>
<feature type="binding site" evidence="1">
    <location>
        <position position="11"/>
    </location>
    <ligand>
        <name>Mg(2+)</name>
        <dbReference type="ChEBI" id="CHEBI:18420"/>
        <label>1</label>
    </ligand>
</feature>
<feature type="binding site" evidence="1">
    <location>
        <position position="11"/>
    </location>
    <ligand>
        <name>Mg(2+)</name>
        <dbReference type="ChEBI" id="CHEBI:18420"/>
        <label>2</label>
    </ligand>
</feature>
<feature type="binding site" evidence="1">
    <location>
        <position position="50"/>
    </location>
    <ligand>
        <name>Mg(2+)</name>
        <dbReference type="ChEBI" id="CHEBI:18420"/>
        <label>1</label>
    </ligand>
</feature>
<feature type="binding site" evidence="1">
    <location>
        <position position="72"/>
    </location>
    <ligand>
        <name>Mg(2+)</name>
        <dbReference type="ChEBI" id="CHEBI:18420"/>
        <label>1</label>
    </ligand>
</feature>
<feature type="binding site" evidence="1">
    <location>
        <position position="136"/>
    </location>
    <ligand>
        <name>Mg(2+)</name>
        <dbReference type="ChEBI" id="CHEBI:18420"/>
        <label>2</label>
    </ligand>
</feature>
<gene>
    <name evidence="1" type="primary">rnhA</name>
    <name type="ordered locus">MSMEG_5562</name>
    <name type="ordered locus">MSMEI_5409</name>
</gene>
<protein>
    <recommendedName>
        <fullName evidence="1">Ribonuclease H</fullName>
        <shortName evidence="1">RNase H</shortName>
        <ecNumber evidence="1">3.1.26.4</ecNumber>
    </recommendedName>
</protein>
<keyword id="KW-0963">Cytoplasm</keyword>
<keyword id="KW-0255">Endonuclease</keyword>
<keyword id="KW-0378">Hydrolase</keyword>
<keyword id="KW-0460">Magnesium</keyword>
<keyword id="KW-0479">Metal-binding</keyword>
<keyword id="KW-0540">Nuclease</keyword>
<keyword id="KW-1185">Reference proteome</keyword>
<accession>A0R3Q8</accession>
<accession>I7FKQ1</accession>
<comment type="function">
    <text evidence="1">Endonuclease that specifically degrades the RNA of RNA-DNA hybrids.</text>
</comment>
<comment type="catalytic activity">
    <reaction evidence="1">
        <text>Endonucleolytic cleavage to 5'-phosphomonoester.</text>
        <dbReference type="EC" id="3.1.26.4"/>
    </reaction>
</comment>
<comment type="cofactor">
    <cofactor evidence="1">
        <name>Mg(2+)</name>
        <dbReference type="ChEBI" id="CHEBI:18420"/>
    </cofactor>
    <text evidence="1">Binds 1 Mg(2+) ion per subunit. May bind a second metal ion at a regulatory site, or after substrate binding.</text>
</comment>
<comment type="subunit">
    <text evidence="1">Monomer.</text>
</comment>
<comment type="subcellular location">
    <subcellularLocation>
        <location evidence="1">Cytoplasm</location>
    </subcellularLocation>
</comment>
<comment type="similarity">
    <text evidence="1">Belongs to the RNase H family.</text>
</comment>
<proteinExistence type="inferred from homology"/>
<dbReference type="EC" id="3.1.26.4" evidence="1"/>
<dbReference type="EMBL" id="CP000480">
    <property type="protein sequence ID" value="ABK73387.1"/>
    <property type="molecule type" value="Genomic_DNA"/>
</dbReference>
<dbReference type="EMBL" id="CP001663">
    <property type="protein sequence ID" value="AFP41850.1"/>
    <property type="molecule type" value="Genomic_DNA"/>
</dbReference>
<dbReference type="RefSeq" id="WP_003896965.1">
    <property type="nucleotide sequence ID" value="NZ_SIJM01000006.1"/>
</dbReference>
<dbReference type="RefSeq" id="YP_889796.1">
    <property type="nucleotide sequence ID" value="NC_008596.1"/>
</dbReference>
<dbReference type="SMR" id="A0R3Q8"/>
<dbReference type="STRING" id="246196.MSMEG_5562"/>
<dbReference type="PaxDb" id="246196-MSMEI_5409"/>
<dbReference type="GeneID" id="93460207"/>
<dbReference type="KEGG" id="msb:LJ00_27495"/>
<dbReference type="KEGG" id="msg:MSMEI_5409"/>
<dbReference type="KEGG" id="msm:MSMEG_5562"/>
<dbReference type="PATRIC" id="fig|246196.19.peg.5422"/>
<dbReference type="eggNOG" id="COG0328">
    <property type="taxonomic scope" value="Bacteria"/>
</dbReference>
<dbReference type="OrthoDB" id="7845843at2"/>
<dbReference type="BRENDA" id="3.1.26.4">
    <property type="organism ID" value="3512"/>
</dbReference>
<dbReference type="Proteomes" id="UP000000757">
    <property type="component" value="Chromosome"/>
</dbReference>
<dbReference type="Proteomes" id="UP000006158">
    <property type="component" value="Chromosome"/>
</dbReference>
<dbReference type="GO" id="GO:0005737">
    <property type="term" value="C:cytoplasm"/>
    <property type="evidence" value="ECO:0007669"/>
    <property type="project" value="UniProtKB-SubCell"/>
</dbReference>
<dbReference type="GO" id="GO:0000287">
    <property type="term" value="F:magnesium ion binding"/>
    <property type="evidence" value="ECO:0007669"/>
    <property type="project" value="UniProtKB-UniRule"/>
</dbReference>
<dbReference type="GO" id="GO:0003676">
    <property type="term" value="F:nucleic acid binding"/>
    <property type="evidence" value="ECO:0007669"/>
    <property type="project" value="InterPro"/>
</dbReference>
<dbReference type="GO" id="GO:0004523">
    <property type="term" value="F:RNA-DNA hybrid ribonuclease activity"/>
    <property type="evidence" value="ECO:0007669"/>
    <property type="project" value="UniProtKB-UniRule"/>
</dbReference>
<dbReference type="GO" id="GO:0043137">
    <property type="term" value="P:DNA replication, removal of RNA primer"/>
    <property type="evidence" value="ECO:0007669"/>
    <property type="project" value="TreeGrafter"/>
</dbReference>
<dbReference type="CDD" id="cd09278">
    <property type="entry name" value="RNase_HI_prokaryote_like"/>
    <property type="match status" value="1"/>
</dbReference>
<dbReference type="FunFam" id="3.30.420.10:FF:000089">
    <property type="entry name" value="Ribonuclease H"/>
    <property type="match status" value="1"/>
</dbReference>
<dbReference type="Gene3D" id="3.30.420.10">
    <property type="entry name" value="Ribonuclease H-like superfamily/Ribonuclease H"/>
    <property type="match status" value="1"/>
</dbReference>
<dbReference type="HAMAP" id="MF_00042">
    <property type="entry name" value="RNase_H"/>
    <property type="match status" value="1"/>
</dbReference>
<dbReference type="InterPro" id="IPR050092">
    <property type="entry name" value="RNase_H"/>
</dbReference>
<dbReference type="InterPro" id="IPR012337">
    <property type="entry name" value="RNaseH-like_sf"/>
</dbReference>
<dbReference type="InterPro" id="IPR002156">
    <property type="entry name" value="RNaseH_domain"/>
</dbReference>
<dbReference type="InterPro" id="IPR036397">
    <property type="entry name" value="RNaseH_sf"/>
</dbReference>
<dbReference type="InterPro" id="IPR022892">
    <property type="entry name" value="RNaseHI"/>
</dbReference>
<dbReference type="NCBIfam" id="NF001236">
    <property type="entry name" value="PRK00203.1"/>
    <property type="match status" value="1"/>
</dbReference>
<dbReference type="PANTHER" id="PTHR10642">
    <property type="entry name" value="RIBONUCLEASE H1"/>
    <property type="match status" value="1"/>
</dbReference>
<dbReference type="PANTHER" id="PTHR10642:SF26">
    <property type="entry name" value="RIBONUCLEASE H1"/>
    <property type="match status" value="1"/>
</dbReference>
<dbReference type="Pfam" id="PF00075">
    <property type="entry name" value="RNase_H"/>
    <property type="match status" value="1"/>
</dbReference>
<dbReference type="SUPFAM" id="SSF53098">
    <property type="entry name" value="Ribonuclease H-like"/>
    <property type="match status" value="1"/>
</dbReference>
<dbReference type="PROSITE" id="PS50879">
    <property type="entry name" value="RNASE_H_1"/>
    <property type="match status" value="1"/>
</dbReference>
<organism>
    <name type="scientific">Mycolicibacterium smegmatis (strain ATCC 700084 / mc(2)155)</name>
    <name type="common">Mycobacterium smegmatis</name>
    <dbReference type="NCBI Taxonomy" id="246196"/>
    <lineage>
        <taxon>Bacteria</taxon>
        <taxon>Bacillati</taxon>
        <taxon>Actinomycetota</taxon>
        <taxon>Actinomycetes</taxon>
        <taxon>Mycobacteriales</taxon>
        <taxon>Mycobacteriaceae</taxon>
        <taxon>Mycolicibacterium</taxon>
    </lineage>
</organism>